<gene>
    <name evidence="1" type="primary">rpsK</name>
    <name type="ordered locus">BPSL3189</name>
</gene>
<proteinExistence type="inferred from homology"/>
<protein>
    <recommendedName>
        <fullName evidence="1">Small ribosomal subunit protein uS11</fullName>
    </recommendedName>
    <alternativeName>
        <fullName evidence="2">30S ribosomal protein S11</fullName>
    </alternativeName>
</protein>
<dbReference type="EMBL" id="BX571965">
    <property type="protein sequence ID" value="CAH37200.1"/>
    <property type="molecule type" value="Genomic_DNA"/>
</dbReference>
<dbReference type="RefSeq" id="WP_004197937.1">
    <property type="nucleotide sequence ID" value="NZ_CP009538.1"/>
</dbReference>
<dbReference type="RefSeq" id="YP_109783.1">
    <property type="nucleotide sequence ID" value="NC_006350.1"/>
</dbReference>
<dbReference type="SMR" id="Q63Q35"/>
<dbReference type="STRING" id="272560.BPSL3189"/>
<dbReference type="GeneID" id="98107136"/>
<dbReference type="KEGG" id="bps:BPSL3189"/>
<dbReference type="PATRIC" id="fig|272560.51.peg.2049"/>
<dbReference type="eggNOG" id="COG0100">
    <property type="taxonomic scope" value="Bacteria"/>
</dbReference>
<dbReference type="PRO" id="PR:Q63Q35"/>
<dbReference type="Proteomes" id="UP000000605">
    <property type="component" value="Chromosome 1"/>
</dbReference>
<dbReference type="GO" id="GO:1990904">
    <property type="term" value="C:ribonucleoprotein complex"/>
    <property type="evidence" value="ECO:0007669"/>
    <property type="project" value="UniProtKB-KW"/>
</dbReference>
<dbReference type="GO" id="GO:0005840">
    <property type="term" value="C:ribosome"/>
    <property type="evidence" value="ECO:0007669"/>
    <property type="project" value="UniProtKB-KW"/>
</dbReference>
<dbReference type="GO" id="GO:0019843">
    <property type="term" value="F:rRNA binding"/>
    <property type="evidence" value="ECO:0007669"/>
    <property type="project" value="UniProtKB-UniRule"/>
</dbReference>
<dbReference type="GO" id="GO:0003735">
    <property type="term" value="F:structural constituent of ribosome"/>
    <property type="evidence" value="ECO:0007669"/>
    <property type="project" value="InterPro"/>
</dbReference>
<dbReference type="GO" id="GO:0006412">
    <property type="term" value="P:translation"/>
    <property type="evidence" value="ECO:0007669"/>
    <property type="project" value="UniProtKB-UniRule"/>
</dbReference>
<dbReference type="FunFam" id="3.30.420.80:FF:000001">
    <property type="entry name" value="30S ribosomal protein S11"/>
    <property type="match status" value="1"/>
</dbReference>
<dbReference type="Gene3D" id="3.30.420.80">
    <property type="entry name" value="Ribosomal protein S11"/>
    <property type="match status" value="1"/>
</dbReference>
<dbReference type="HAMAP" id="MF_01310">
    <property type="entry name" value="Ribosomal_uS11"/>
    <property type="match status" value="1"/>
</dbReference>
<dbReference type="InterPro" id="IPR001971">
    <property type="entry name" value="Ribosomal_uS11"/>
</dbReference>
<dbReference type="InterPro" id="IPR019981">
    <property type="entry name" value="Ribosomal_uS11_bac-type"/>
</dbReference>
<dbReference type="InterPro" id="IPR018102">
    <property type="entry name" value="Ribosomal_uS11_CS"/>
</dbReference>
<dbReference type="InterPro" id="IPR036967">
    <property type="entry name" value="Ribosomal_uS11_sf"/>
</dbReference>
<dbReference type="NCBIfam" id="NF003698">
    <property type="entry name" value="PRK05309.1"/>
    <property type="match status" value="1"/>
</dbReference>
<dbReference type="NCBIfam" id="TIGR03632">
    <property type="entry name" value="uS11_bact"/>
    <property type="match status" value="1"/>
</dbReference>
<dbReference type="PANTHER" id="PTHR11759">
    <property type="entry name" value="40S RIBOSOMAL PROTEIN S14/30S RIBOSOMAL PROTEIN S11"/>
    <property type="match status" value="1"/>
</dbReference>
<dbReference type="Pfam" id="PF00411">
    <property type="entry name" value="Ribosomal_S11"/>
    <property type="match status" value="1"/>
</dbReference>
<dbReference type="PIRSF" id="PIRSF002131">
    <property type="entry name" value="Ribosomal_S11"/>
    <property type="match status" value="1"/>
</dbReference>
<dbReference type="SUPFAM" id="SSF53137">
    <property type="entry name" value="Translational machinery components"/>
    <property type="match status" value="1"/>
</dbReference>
<dbReference type="PROSITE" id="PS00054">
    <property type="entry name" value="RIBOSOMAL_S11"/>
    <property type="match status" value="1"/>
</dbReference>
<keyword id="KW-1185">Reference proteome</keyword>
<keyword id="KW-0687">Ribonucleoprotein</keyword>
<keyword id="KW-0689">Ribosomal protein</keyword>
<keyword id="KW-0694">RNA-binding</keyword>
<keyword id="KW-0699">rRNA-binding</keyword>
<sequence>MAKASNTAAQRVRKKVKKNVAEGVVHVHASFNNTIITITDRQGNALAWATSGGQGFKGSRKSTPFAAQVAAESAGRVAMEYGVKNLEVRIKGPGPGRESAVRALHGLGIKITAISDVTPIPHNGCRPPKRRRI</sequence>
<comment type="function">
    <text evidence="1">Located on the platform of the 30S subunit, it bridges several disparate RNA helices of the 16S rRNA. Forms part of the Shine-Dalgarno cleft in the 70S ribosome.</text>
</comment>
<comment type="subunit">
    <text evidence="1">Part of the 30S ribosomal subunit. Interacts with proteins S7 and S18. Binds to IF-3.</text>
</comment>
<comment type="similarity">
    <text evidence="1">Belongs to the universal ribosomal protein uS11 family.</text>
</comment>
<reference key="1">
    <citation type="journal article" date="2004" name="Proc. Natl. Acad. Sci. U.S.A.">
        <title>Genomic plasticity of the causative agent of melioidosis, Burkholderia pseudomallei.</title>
        <authorList>
            <person name="Holden M.T.G."/>
            <person name="Titball R.W."/>
            <person name="Peacock S.J."/>
            <person name="Cerdeno-Tarraga A.-M."/>
            <person name="Atkins T."/>
            <person name="Crossman L.C."/>
            <person name="Pitt T."/>
            <person name="Churcher C."/>
            <person name="Mungall K.L."/>
            <person name="Bentley S.D."/>
            <person name="Sebaihia M."/>
            <person name="Thomson N.R."/>
            <person name="Bason N."/>
            <person name="Beacham I.R."/>
            <person name="Brooks K."/>
            <person name="Brown K.A."/>
            <person name="Brown N.F."/>
            <person name="Challis G.L."/>
            <person name="Cherevach I."/>
            <person name="Chillingworth T."/>
            <person name="Cronin A."/>
            <person name="Crossett B."/>
            <person name="Davis P."/>
            <person name="DeShazer D."/>
            <person name="Feltwell T."/>
            <person name="Fraser A."/>
            <person name="Hance Z."/>
            <person name="Hauser H."/>
            <person name="Holroyd S."/>
            <person name="Jagels K."/>
            <person name="Keith K.E."/>
            <person name="Maddison M."/>
            <person name="Moule S."/>
            <person name="Price C."/>
            <person name="Quail M.A."/>
            <person name="Rabbinowitsch E."/>
            <person name="Rutherford K."/>
            <person name="Sanders M."/>
            <person name="Simmonds M."/>
            <person name="Songsivilai S."/>
            <person name="Stevens K."/>
            <person name="Tumapa S."/>
            <person name="Vesaratchavest M."/>
            <person name="Whitehead S."/>
            <person name="Yeats C."/>
            <person name="Barrell B.G."/>
            <person name="Oyston P.C.F."/>
            <person name="Parkhill J."/>
        </authorList>
    </citation>
    <scope>NUCLEOTIDE SEQUENCE [LARGE SCALE GENOMIC DNA]</scope>
    <source>
        <strain>K96243</strain>
    </source>
</reference>
<accession>Q63Q35</accession>
<name>RS11_BURPS</name>
<feature type="chain" id="PRO_0000123124" description="Small ribosomal subunit protein uS11">
    <location>
        <begin position="1"/>
        <end position="133"/>
    </location>
</feature>
<evidence type="ECO:0000255" key="1">
    <source>
        <dbReference type="HAMAP-Rule" id="MF_01310"/>
    </source>
</evidence>
<evidence type="ECO:0000305" key="2"/>
<organism>
    <name type="scientific">Burkholderia pseudomallei (strain K96243)</name>
    <dbReference type="NCBI Taxonomy" id="272560"/>
    <lineage>
        <taxon>Bacteria</taxon>
        <taxon>Pseudomonadati</taxon>
        <taxon>Pseudomonadota</taxon>
        <taxon>Betaproteobacteria</taxon>
        <taxon>Burkholderiales</taxon>
        <taxon>Burkholderiaceae</taxon>
        <taxon>Burkholderia</taxon>
        <taxon>pseudomallei group</taxon>
    </lineage>
</organism>